<reference key="1">
    <citation type="journal article" date="1994" name="Nucleic Acids Res.">
        <title>The yeast BDF1 gene encodes a transcription factor involved in the expression of a broad class of genes including snRNAs.</title>
        <authorList>
            <person name="Lygerou Z."/>
            <person name="Conesa C."/>
            <person name="Lesage P."/>
            <person name="Swanson R.N."/>
            <person name="Ruet A."/>
            <person name="Carlson M."/>
            <person name="Sentenac A."/>
            <person name="Seraphin B."/>
        </authorList>
    </citation>
    <scope>NUCLEOTIDE SEQUENCE [GENOMIC DNA]</scope>
    <scope>FUNCTION</scope>
    <source>
        <strain>ATCC 204508 / S288c</strain>
    </source>
</reference>
<reference key="2">
    <citation type="journal article" date="1995" name="Mol. Cell. Biol.">
        <title>Bdf1, a yeast chromosomal protein required for sporulation.</title>
        <authorList>
            <person name="Chua P."/>
            <person name="Roeder G.S."/>
        </authorList>
    </citation>
    <scope>NUCLEOTIDE SEQUENCE [GENOMIC DNA]</scope>
    <scope>FUNCTION</scope>
    <scope>SUBCELLULAR LOCATION</scope>
</reference>
<reference key="3">
    <citation type="journal article" date="1997" name="Nature">
        <title>The nucleotide sequence of Saccharomyces cerevisiae chromosome XII.</title>
        <authorList>
            <person name="Johnston M."/>
            <person name="Hillier L.W."/>
            <person name="Riles L."/>
            <person name="Albermann K."/>
            <person name="Andre B."/>
            <person name="Ansorge W."/>
            <person name="Benes V."/>
            <person name="Brueckner M."/>
            <person name="Delius H."/>
            <person name="Dubois E."/>
            <person name="Duesterhoeft A."/>
            <person name="Entian K.-D."/>
            <person name="Floeth M."/>
            <person name="Goffeau A."/>
            <person name="Hebling U."/>
            <person name="Heumann K."/>
            <person name="Heuss-Neitzel D."/>
            <person name="Hilbert H."/>
            <person name="Hilger F."/>
            <person name="Kleine K."/>
            <person name="Koetter P."/>
            <person name="Louis E.J."/>
            <person name="Messenguy F."/>
            <person name="Mewes H.-W."/>
            <person name="Miosga T."/>
            <person name="Moestl D."/>
            <person name="Mueller-Auer S."/>
            <person name="Nentwich U."/>
            <person name="Obermaier B."/>
            <person name="Piravandi E."/>
            <person name="Pohl T.M."/>
            <person name="Portetelle D."/>
            <person name="Purnelle B."/>
            <person name="Rechmann S."/>
            <person name="Rieger M."/>
            <person name="Rinke M."/>
            <person name="Rose M."/>
            <person name="Scharfe M."/>
            <person name="Scherens B."/>
            <person name="Scholler P."/>
            <person name="Schwager C."/>
            <person name="Schwarz S."/>
            <person name="Underwood A.P."/>
            <person name="Urrestarazu L.A."/>
            <person name="Vandenbol M."/>
            <person name="Verhasselt P."/>
            <person name="Vierendeels F."/>
            <person name="Voet M."/>
            <person name="Volckaert G."/>
            <person name="Voss H."/>
            <person name="Wambutt R."/>
            <person name="Wedler E."/>
            <person name="Wedler H."/>
            <person name="Zimmermann F.K."/>
            <person name="Zollner A."/>
            <person name="Hani J."/>
            <person name="Hoheisel J.D."/>
        </authorList>
    </citation>
    <scope>NUCLEOTIDE SEQUENCE [LARGE SCALE GENOMIC DNA]</scope>
    <source>
        <strain>ATCC 204508 / S288c</strain>
    </source>
</reference>
<reference key="4">
    <citation type="journal article" date="2014" name="G3 (Bethesda)">
        <title>The reference genome sequence of Saccharomyces cerevisiae: Then and now.</title>
        <authorList>
            <person name="Engel S.R."/>
            <person name="Dietrich F.S."/>
            <person name="Fisk D.G."/>
            <person name="Binkley G."/>
            <person name="Balakrishnan R."/>
            <person name="Costanzo M.C."/>
            <person name="Dwight S.S."/>
            <person name="Hitz B.C."/>
            <person name="Karra K."/>
            <person name="Nash R.S."/>
            <person name="Weng S."/>
            <person name="Wong E.D."/>
            <person name="Lloyd P."/>
            <person name="Skrzypek M.S."/>
            <person name="Miyasato S.R."/>
            <person name="Simison M."/>
            <person name="Cherry J.M."/>
        </authorList>
    </citation>
    <scope>GENOME REANNOTATION</scope>
    <source>
        <strain>ATCC 204508 / S288c</strain>
    </source>
</reference>
<reference key="5">
    <citation type="journal article" date="1993" name="Mol. Cell. Biol.">
        <title>Evidence that the SKI antiviral system of Saccharomyces cerevisiae acts by blocking expression of viral mRNA.</title>
        <authorList>
            <person name="Widner W.R."/>
            <person name="Wickner R.B."/>
        </authorList>
    </citation>
    <scope>NUCLEOTIDE SEQUENCE [MRNA] OF 471-686</scope>
</reference>
<reference key="6">
    <citation type="journal article" date="1997" name="Trends Biochem. Sci.">
        <title>The bromodomain revisited.</title>
        <authorList>
            <person name="Jeanmougin F."/>
            <person name="Wurtz J.-M."/>
            <person name="Le Douarin B."/>
            <person name="Chambon P."/>
            <person name="Losson R."/>
        </authorList>
    </citation>
    <scope>DOMAIN BROMODOMAIN</scope>
</reference>
<reference key="7">
    <citation type="journal article" date="2000" name="Genes Dev.">
        <title>Bromodomain factor 1 corresponds to a missing piece of yeast TFIID.</title>
        <authorList>
            <person name="Matangkasombut O."/>
            <person name="Buratowski R.M."/>
            <person name="Swilling N.W."/>
            <person name="Buratowski S."/>
        </authorList>
    </citation>
    <scope>FUNCTION</scope>
    <scope>INTERACTION WITH TAF7</scope>
</reference>
<reference key="8">
    <citation type="journal article" date="2001" name="FEBS Lett.">
        <title>Bromodomain factor 1 (Bdf1) protein interacts with histones.</title>
        <authorList>
            <person name="Pamblanco M."/>
            <person name="Poveda A."/>
            <person name="Sendra R."/>
            <person name="Rodriguez-Navarro S."/>
            <person name="Perez-Ortin J.E."/>
            <person name="Tordera V."/>
        </authorList>
    </citation>
    <scope>INTERACTION WITH HISTONES H3 AND H4</scope>
</reference>
<reference key="9">
    <citation type="journal article" date="2002" name="Proc. Natl. Acad. Sci. U.S.A.">
        <title>A genome-wide screen for methyl methanesulfonate-sensitive mutants reveals genes required for S phase progression in the presence of DNA damage.</title>
        <authorList>
            <person name="Chang M."/>
            <person name="Bellaoui M."/>
            <person name="Boone C."/>
            <person name="Brown G.W."/>
        </authorList>
    </citation>
    <scope>FUNCTION</scope>
</reference>
<reference key="10">
    <citation type="journal article" date="2003" name="Mol. Cell">
        <title>Different sensitivities of bromodomain factors 1 and 2 to histone H4 acetylation.</title>
        <authorList>
            <person name="Matangkasombut O."/>
            <person name="Buratowski S."/>
        </authorList>
    </citation>
    <scope>FUNCTION</scope>
    <scope>INTERACTION WITH HISTONES H3 AND H4</scope>
</reference>
<reference key="11">
    <citation type="journal article" date="2003" name="Mol. Cell">
        <title>Bromodomains mediate an acetyl-histone encoded antisilencing function at heterochromatin boundaries.</title>
        <authorList>
            <person name="Ladurner A.G."/>
            <person name="Inouye C."/>
            <person name="Jain R."/>
            <person name="Tjian R."/>
        </authorList>
    </citation>
    <scope>FUNCTION</scope>
    <scope>INTERACTION WITH ACETYLATED HISTONES H3 AND H4</scope>
    <scope>MUTAGENESIS OF TYR-187 AND TYR-354</scope>
</reference>
<reference key="12">
    <citation type="journal article" date="2003" name="Nature">
        <title>Global analysis of protein localization in budding yeast.</title>
        <authorList>
            <person name="Huh W.-K."/>
            <person name="Falvo J.V."/>
            <person name="Gerke L.C."/>
            <person name="Carroll A.S."/>
            <person name="Howson R.W."/>
            <person name="Weissman J.S."/>
            <person name="O'Shea E.K."/>
        </authorList>
    </citation>
    <scope>SUBCELLULAR LOCATION [LARGE SCALE ANALYSIS]</scope>
</reference>
<reference key="13">
    <citation type="journal article" date="2003" name="Nature">
        <title>Global analysis of protein expression in yeast.</title>
        <authorList>
            <person name="Ghaemmaghami S."/>
            <person name="Huh W.-K."/>
            <person name="Bower K."/>
            <person name="Howson R.W."/>
            <person name="Belle A."/>
            <person name="Dephoure N."/>
            <person name="O'Shea E.K."/>
            <person name="Weissman J.S."/>
        </authorList>
    </citation>
    <scope>LEVEL OF PROTEIN EXPRESSION [LARGE SCALE ANALYSIS]</scope>
</reference>
<reference key="14">
    <citation type="journal article" date="2004" name="Mol. Cell">
        <title>Precise nucleosome positioning and the TATA box dictate requirements for the histone H4 tail and the bromodomain factor Bdf1.</title>
        <authorList>
            <person name="Martinez-Campa C."/>
            <person name="Politis P."/>
            <person name="Moreau J.-L."/>
            <person name="Kent N."/>
            <person name="Goodall J."/>
            <person name="Mellor J."/>
            <person name="Goding C.R."/>
        </authorList>
    </citation>
    <scope>FUNCTION</scope>
</reference>
<reference key="15">
    <citation type="journal article" date="2004" name="Mol. Cell. Biol.">
        <title>Bromodomain factor 1 (Bdf1) is phosphorylated by protein kinase CK2.</title>
        <authorList>
            <person name="Sawa C."/>
            <person name="Nedea E."/>
            <person name="Krogan N."/>
            <person name="Wada T."/>
            <person name="Handa H."/>
            <person name="Greenblatt J."/>
            <person name="Buratowski S."/>
        </authorList>
    </citation>
    <scope>PHOSPHORYLATION BY THE CK2 PROTEIN KINASE COMPLEX</scope>
</reference>
<reference key="16">
    <citation type="journal article" date="2004" name="Mol. Microbiol.">
        <title>The bromodomain-containing protein Bdf1p acts as a phenotypic and transcriptional multicopy suppressor of YAF9 deletion in yeast.</title>
        <authorList>
            <person name="Bianchi M.M."/>
            <person name="Costanzo G."/>
            <person name="Chelstowska A."/>
            <person name="Grabowska D."/>
            <person name="Mazzoni C."/>
            <person name="Piccinni E."/>
            <person name="Cavalli A."/>
            <person name="Ciceroni F."/>
            <person name="Rytka J."/>
            <person name="Slonimski P.P."/>
            <person name="Frontali L."/>
            <person name="Negri R."/>
        </authorList>
    </citation>
    <scope>FUNCTION</scope>
</reference>
<reference key="17">
    <citation type="journal article" date="2005" name="Genetics">
        <title>Multiple bromodomain genes are involved in restricting the spread of heterochromatic silencing at the Saccharomyces cerevisiae HMR-tRNA boundary.</title>
        <authorList>
            <person name="Jambunathan N."/>
            <person name="Martinez A.W."/>
            <person name="Robert E.C."/>
            <person name="Agochukwu N.B."/>
            <person name="Ibos M.E."/>
            <person name="Dugas S.L."/>
            <person name="Donze D."/>
        </authorList>
    </citation>
    <scope>DISRUPTION PHENOTYPE</scope>
</reference>
<reference key="18">
    <citation type="journal article" date="2005" name="Mol. Cell. Proteomics">
        <title>Quantitative phosphoproteomics applied to the yeast pheromone signaling pathway.</title>
        <authorList>
            <person name="Gruhler A."/>
            <person name="Olsen J.V."/>
            <person name="Mohammed S."/>
            <person name="Mortensen P."/>
            <person name="Faergeman N.J."/>
            <person name="Mann M."/>
            <person name="Jensen O.N."/>
        </authorList>
    </citation>
    <scope>IDENTIFICATION BY MASS SPECTROMETRY [LARGE SCALE ANALYSIS]</scope>
    <source>
        <strain>YAL6B</strain>
    </source>
</reference>
<reference key="19">
    <citation type="journal article" date="2007" name="J. Proteome Res.">
        <title>Large-scale phosphorylation analysis of alpha-factor-arrested Saccharomyces cerevisiae.</title>
        <authorList>
            <person name="Li X."/>
            <person name="Gerber S.A."/>
            <person name="Rudner A.D."/>
            <person name="Beausoleil S.A."/>
            <person name="Haas W."/>
            <person name="Villen J."/>
            <person name="Elias J.E."/>
            <person name="Gygi S.P."/>
        </authorList>
    </citation>
    <scope>PHOSPHORYLATION [LARGE SCALE ANALYSIS] AT SER-270 AND SER-429</scope>
    <scope>IDENTIFICATION BY MASS SPECTROMETRY [LARGE SCALE ANALYSIS]</scope>
    <source>
        <strain>ADR376</strain>
    </source>
</reference>
<reference key="20">
    <citation type="journal article" date="2007" name="Proc. Natl. Acad. Sci. U.S.A.">
        <title>Analysis of phosphorylation sites on proteins from Saccharomyces cerevisiae by electron transfer dissociation (ETD) mass spectrometry.</title>
        <authorList>
            <person name="Chi A."/>
            <person name="Huttenhower C."/>
            <person name="Geer L.Y."/>
            <person name="Coon J.J."/>
            <person name="Syka J.E.P."/>
            <person name="Bai D.L."/>
            <person name="Shabanowitz J."/>
            <person name="Burke D.J."/>
            <person name="Troyanskaya O.G."/>
            <person name="Hunt D.F."/>
        </authorList>
    </citation>
    <scope>IDENTIFICATION BY MASS SPECTROMETRY [LARGE SCALE ANALYSIS]</scope>
</reference>
<reference key="21">
    <citation type="journal article" date="2008" name="Mol. Cell. Proteomics">
        <title>A multidimensional chromatography technology for in-depth phosphoproteome analysis.</title>
        <authorList>
            <person name="Albuquerque C.P."/>
            <person name="Smolka M.B."/>
            <person name="Payne S.H."/>
            <person name="Bafna V."/>
            <person name="Eng J."/>
            <person name="Zhou H."/>
        </authorList>
    </citation>
    <scope>PHOSPHORYLATION [LARGE SCALE ANALYSIS] AT SER-615 AND SER-659</scope>
    <scope>IDENTIFICATION BY MASS SPECTROMETRY [LARGE SCALE ANALYSIS]</scope>
</reference>
<reference key="22">
    <citation type="journal article" date="2009" name="Science">
        <title>Global analysis of Cdk1 substrate phosphorylation sites provides insights into evolution.</title>
        <authorList>
            <person name="Holt L.J."/>
            <person name="Tuch B.B."/>
            <person name="Villen J."/>
            <person name="Johnson A.D."/>
            <person name="Gygi S.P."/>
            <person name="Morgan D.O."/>
        </authorList>
    </citation>
    <scope>PHOSPHORYLATION [LARGE SCALE ANALYSIS] AT SER-270; SER-429 AND SER-615</scope>
    <scope>IDENTIFICATION BY MASS SPECTROMETRY [LARGE SCALE ANALYSIS]</scope>
</reference>
<keyword id="KW-0103">Bromodomain</keyword>
<keyword id="KW-0175">Coiled coil</keyword>
<keyword id="KW-0227">DNA damage</keyword>
<keyword id="KW-0234">DNA repair</keyword>
<keyword id="KW-0539">Nucleus</keyword>
<keyword id="KW-0597">Phosphoprotein</keyword>
<keyword id="KW-1185">Reference proteome</keyword>
<keyword id="KW-0677">Repeat</keyword>
<keyword id="KW-0749">Sporulation</keyword>
<keyword id="KW-0804">Transcription</keyword>
<keyword id="KW-0805">Transcription regulation</keyword>
<gene>
    <name type="primary">BDF1</name>
    <name type="ordered locus">YLR399C</name>
    <name type="ORF">L8084.18</name>
</gene>
<protein>
    <recommendedName>
        <fullName>Bromodomain-containing factor 1</fullName>
    </recommendedName>
</protein>
<evidence type="ECO:0000255" key="1"/>
<evidence type="ECO:0000255" key="2">
    <source>
        <dbReference type="PROSITE-ProRule" id="PRU00035"/>
    </source>
</evidence>
<evidence type="ECO:0000255" key="3">
    <source>
        <dbReference type="PROSITE-ProRule" id="PRU00857"/>
    </source>
</evidence>
<evidence type="ECO:0000256" key="4">
    <source>
        <dbReference type="SAM" id="MobiDB-lite"/>
    </source>
</evidence>
<evidence type="ECO:0000269" key="5">
    <source>
    </source>
</evidence>
<evidence type="ECO:0000269" key="6">
    <source>
    </source>
</evidence>
<evidence type="ECO:0000269" key="7">
    <source>
    </source>
</evidence>
<evidence type="ECO:0000269" key="8">
    <source>
    </source>
</evidence>
<evidence type="ECO:0000269" key="9">
    <source>
    </source>
</evidence>
<evidence type="ECO:0000269" key="10">
    <source>
    </source>
</evidence>
<evidence type="ECO:0000269" key="11">
    <source>
    </source>
</evidence>
<evidence type="ECO:0000269" key="12">
    <source>
    </source>
</evidence>
<evidence type="ECO:0000269" key="13">
    <source>
    </source>
</evidence>
<evidence type="ECO:0000269" key="14">
    <source>
    </source>
</evidence>
<evidence type="ECO:0000269" key="15">
    <source>
    </source>
</evidence>
<evidence type="ECO:0000269" key="16">
    <source>
    </source>
</evidence>
<evidence type="ECO:0000269" key="17">
    <source>
    </source>
</evidence>
<evidence type="ECO:0000305" key="18"/>
<evidence type="ECO:0007744" key="19">
    <source>
    </source>
</evidence>
<evidence type="ECO:0007744" key="20">
    <source>
    </source>
</evidence>
<evidence type="ECO:0007744" key="21">
    <source>
    </source>
</evidence>
<comment type="function">
    <text evidence="5 7 8 9 13 14 16 17">Transcription factor involved in the expression of a broad class of genes including snRNAs. Required for sporulation and DNA-damage repair. Prevents the spreading of SIR silencing at telomeres and protects histone H4, but not H3, from deacetylation.</text>
</comment>
<comment type="subunit">
    <text evidence="5 6 8 9">Interacts with the TFIID subunit TAF7 and with acetylated histones H3 and H4.</text>
</comment>
<comment type="interaction">
    <interactant intactId="EBI-3493">
        <id>P35817</id>
    </interactant>
    <interactant intactId="EBI-37620">
        <id>Q07442</id>
        <label>BDF2</label>
    </interactant>
    <organismsDiffer>false</organismsDiffer>
    <experiments>6</experiments>
</comment>
<comment type="interaction">
    <interactant intactId="EBI-3493">
        <id>P35817</id>
    </interactant>
    <interactant intactId="EBI-8113">
        <id>P02309</id>
        <label>HHF2</label>
    </interactant>
    <organismsDiffer>false</organismsDiffer>
    <experiments>3</experiments>
</comment>
<comment type="interaction">
    <interactant intactId="EBI-3493">
        <id>P35817</id>
    </interactant>
    <interactant intactId="EBI-8098">
        <id>P61830</id>
        <label>HHT2</label>
    </interactant>
    <organismsDiffer>false</organismsDiffer>
    <experiments>4</experiments>
</comment>
<comment type="interaction">
    <interactant intactId="EBI-3493">
        <id>P35817</id>
    </interactant>
    <interactant intactId="EBI-8080">
        <id>Q12692</id>
        <label>HTZ1</label>
    </interactant>
    <organismsDiffer>false</organismsDiffer>
    <experiments>6</experiments>
</comment>
<comment type="interaction">
    <interactant intactId="EBI-3493">
        <id>P35817</id>
    </interactant>
    <interactant intactId="EBI-23061">
        <id>P53201</id>
        <label>SWC4</label>
    </interactant>
    <organismsDiffer>false</organismsDiffer>
    <experiments>2</experiments>
</comment>
<comment type="interaction">
    <interactant intactId="EBI-3493">
        <id>P35817</id>
    </interactant>
    <interactant intactId="EBI-22102">
        <id>Q05471</id>
        <label>SWR1</label>
    </interactant>
    <organismsDiffer>false</organismsDiffer>
    <experiments>4</experiments>
</comment>
<comment type="interaction">
    <interactant intactId="EBI-3493">
        <id>P35817</id>
    </interactant>
    <interactant intactId="EBI-18855">
        <id>P46677</id>
        <label>TAF1</label>
    </interactant>
    <organismsDiffer>false</organismsDiffer>
    <experiments>3</experiments>
</comment>
<comment type="interaction">
    <interactant intactId="EBI-3493">
        <id>P35817</id>
    </interactant>
    <interactant intactId="EBI-35097">
        <id>Q03761</id>
        <label>TAF12</label>
    </interactant>
    <organismsDiffer>false</organismsDiffer>
    <experiments>2</experiments>
</comment>
<comment type="interaction">
    <interactant intactId="EBI-3493">
        <id>P35817</id>
    </interactant>
    <interactant intactId="EBI-18876">
        <id>P53040</id>
        <label>TAF6</label>
    </interactant>
    <organismsDiffer>false</organismsDiffer>
    <experiments>2</experiments>
</comment>
<comment type="interaction">
    <interactant intactId="EBI-3493">
        <id>P35817</id>
    </interactant>
    <interactant intactId="EBI-27490">
        <id>Q05021</id>
        <label>TAF7</label>
    </interactant>
    <organismsDiffer>false</organismsDiffer>
    <experiments>5</experiments>
</comment>
<comment type="interaction">
    <interactant intactId="EBI-3493">
        <id>P35817</id>
    </interactant>
    <interactant intactId="EBI-27814">
        <id>Q03433</id>
        <label>VPS71</label>
    </interactant>
    <organismsDiffer>false</organismsDiffer>
    <experiments>3</experiments>
</comment>
<comment type="interaction">
    <interactant intactId="EBI-3493">
        <id>P35817</id>
    </interactant>
    <interactant intactId="EBI-28841">
        <id>P53930</id>
        <label>YAF9</label>
    </interactant>
    <organismsDiffer>false</organismsDiffer>
    <experiments>4</experiments>
</comment>
<comment type="subcellular location">
    <subcellularLocation>
        <location evidence="10 16">Nucleus</location>
    </subcellularLocation>
</comment>
<comment type="PTM">
    <text evidence="12">Phosphorylated by the casein kinase CK2 complex.</text>
</comment>
<comment type="disruption phenotype">
    <text evidence="15">Heterochromatin spreading downstream of the silent mating-type locus HMR.</text>
</comment>
<comment type="miscellaneous">
    <text evidence="11">Present with 8100 molecules/cell in log phase SD medium.</text>
</comment>
<comment type="similarity">
    <text evidence="18">Belongs to the BET family.</text>
</comment>
<feature type="chain" id="PRO_0000211176" description="Bromodomain-containing factor 1">
    <location>
        <begin position="1"/>
        <end position="686"/>
    </location>
</feature>
<feature type="domain" description="Bromo 1" evidence="2">
    <location>
        <begin position="145"/>
        <end position="254"/>
    </location>
</feature>
<feature type="domain" description="Bromo 2" evidence="2">
    <location>
        <begin position="312"/>
        <end position="421"/>
    </location>
</feature>
<feature type="domain" description="NET" evidence="3">
    <location>
        <begin position="518"/>
        <end position="598"/>
    </location>
</feature>
<feature type="region of interest" description="Disordered" evidence="4">
    <location>
        <begin position="1"/>
        <end position="69"/>
    </location>
</feature>
<feature type="region of interest" description="Disordered" evidence="4">
    <location>
        <begin position="85"/>
        <end position="150"/>
    </location>
</feature>
<feature type="region of interest" description="Disordered" evidence="4">
    <location>
        <begin position="283"/>
        <end position="304"/>
    </location>
</feature>
<feature type="region of interest" description="Disordered" evidence="4">
    <location>
        <begin position="424"/>
        <end position="447"/>
    </location>
</feature>
<feature type="region of interest" description="Disordered" evidence="4">
    <location>
        <begin position="486"/>
        <end position="523"/>
    </location>
</feature>
<feature type="region of interest" description="Disordered" evidence="4">
    <location>
        <begin position="594"/>
        <end position="636"/>
    </location>
</feature>
<feature type="region of interest" description="Disordered" evidence="4">
    <location>
        <begin position="649"/>
        <end position="686"/>
    </location>
</feature>
<feature type="coiled-coil region" evidence="1">
    <location>
        <begin position="460"/>
        <end position="499"/>
    </location>
</feature>
<feature type="compositionally biased region" description="Low complexity" evidence="4">
    <location>
        <begin position="9"/>
        <end position="25"/>
    </location>
</feature>
<feature type="compositionally biased region" description="Basic and acidic residues" evidence="4">
    <location>
        <begin position="99"/>
        <end position="120"/>
    </location>
</feature>
<feature type="compositionally biased region" description="Pro residues" evidence="4">
    <location>
        <begin position="130"/>
        <end position="139"/>
    </location>
</feature>
<feature type="compositionally biased region" description="Basic residues" evidence="4">
    <location>
        <begin position="287"/>
        <end position="296"/>
    </location>
</feature>
<feature type="compositionally biased region" description="Acidic residues" evidence="4">
    <location>
        <begin position="438"/>
        <end position="447"/>
    </location>
</feature>
<feature type="compositionally biased region" description="Basic residues" evidence="4">
    <location>
        <begin position="488"/>
        <end position="507"/>
    </location>
</feature>
<feature type="compositionally biased region" description="Polar residues" evidence="4">
    <location>
        <begin position="594"/>
        <end position="620"/>
    </location>
</feature>
<feature type="compositionally biased region" description="Polar residues" evidence="4">
    <location>
        <begin position="652"/>
        <end position="671"/>
    </location>
</feature>
<feature type="compositionally biased region" description="Acidic residues" evidence="4">
    <location>
        <begin position="675"/>
        <end position="686"/>
    </location>
</feature>
<feature type="modified residue" description="Phosphoserine" evidence="19 21">
    <location>
        <position position="270"/>
    </location>
</feature>
<feature type="modified residue" description="Phosphoserine" evidence="19 21">
    <location>
        <position position="429"/>
    </location>
</feature>
<feature type="modified residue" description="Phosphoserine" evidence="20 21">
    <location>
        <position position="615"/>
    </location>
</feature>
<feature type="modified residue" description="Phosphoserine" evidence="20">
    <location>
        <position position="659"/>
    </location>
</feature>
<feature type="mutagenesis site" description="Impairs interaction with histones H3 and H4; when associated with F-354." evidence="9">
    <original>Y</original>
    <variation>F</variation>
    <location>
        <position position="187"/>
    </location>
</feature>
<feature type="mutagenesis site" description="Impairs interaction with histones H3 and H4; when associated with F-187." evidence="9">
    <original>Y</original>
    <variation>F</variation>
    <location>
        <position position="354"/>
    </location>
</feature>
<feature type="sequence conflict" description="In Ref. 1; CAA79377." evidence="18" ref="1">
    <original>Q</original>
    <variation>LC</variation>
    <location>
        <position position="8"/>
    </location>
</feature>
<feature type="sequence conflict" description="In Ref. 2; AAA89115." evidence="18" ref="2">
    <original>GA</original>
    <variation>R</variation>
    <location>
        <begin position="93"/>
        <end position="94"/>
    </location>
</feature>
<feature type="sequence conflict" description="In Ref. 1; CAA79377." evidence="18" ref="1">
    <original>A</original>
    <variation>P</variation>
    <location>
        <position position="94"/>
    </location>
</feature>
<feature type="sequence conflict" description="In Ref. 1; CAA79377." evidence="18" ref="1">
    <original>A</original>
    <variation>P</variation>
    <location>
        <position position="282"/>
    </location>
</feature>
<feature type="sequence conflict" description="In Ref. 1; CAA79377." evidence="18" ref="1">
    <original>D</original>
    <variation>E</variation>
    <location>
        <position position="385"/>
    </location>
</feature>
<feature type="sequence conflict" description="In Ref. 5; AAA35048." evidence="18" ref="5">
    <original>A</original>
    <variation>R</variation>
    <location>
        <position position="493"/>
    </location>
</feature>
<name>BDF1_YEAST</name>
<organism>
    <name type="scientific">Saccharomyces cerevisiae (strain ATCC 204508 / S288c)</name>
    <name type="common">Baker's yeast</name>
    <dbReference type="NCBI Taxonomy" id="559292"/>
    <lineage>
        <taxon>Eukaryota</taxon>
        <taxon>Fungi</taxon>
        <taxon>Dikarya</taxon>
        <taxon>Ascomycota</taxon>
        <taxon>Saccharomycotina</taxon>
        <taxon>Saccharomycetes</taxon>
        <taxon>Saccharomycetales</taxon>
        <taxon>Saccharomycetaceae</taxon>
        <taxon>Saccharomyces</taxon>
    </lineage>
</organism>
<dbReference type="EMBL" id="Z18944">
    <property type="protein sequence ID" value="CAA79377.1"/>
    <property type="molecule type" value="Genomic_DNA"/>
</dbReference>
<dbReference type="EMBL" id="U18116">
    <property type="protein sequence ID" value="AAA89115.1"/>
    <property type="molecule type" value="Genomic_DNA"/>
</dbReference>
<dbReference type="EMBL" id="U19729">
    <property type="protein sequence ID" value="AAB82357.1"/>
    <property type="molecule type" value="Genomic_DNA"/>
</dbReference>
<dbReference type="EMBL" id="L13469">
    <property type="protein sequence ID" value="AAA35048.1"/>
    <property type="molecule type" value="mRNA"/>
</dbReference>
<dbReference type="EMBL" id="BK006945">
    <property type="protein sequence ID" value="DAA09700.1"/>
    <property type="molecule type" value="Genomic_DNA"/>
</dbReference>
<dbReference type="PIR" id="S55955">
    <property type="entry name" value="S55955"/>
</dbReference>
<dbReference type="RefSeq" id="NP_013503.1">
    <property type="nucleotide sequence ID" value="NM_001182287.1"/>
</dbReference>
<dbReference type="SMR" id="P35817"/>
<dbReference type="BioGRID" id="31658">
    <property type="interactions" value="409"/>
</dbReference>
<dbReference type="ComplexPortal" id="CPX-2122">
    <property type="entry name" value="Swr1 chromatin remodelling complex"/>
</dbReference>
<dbReference type="DIP" id="DIP-1624N"/>
<dbReference type="FunCoup" id="P35817">
    <property type="interactions" value="703"/>
</dbReference>
<dbReference type="IntAct" id="P35817">
    <property type="interactions" value="70"/>
</dbReference>
<dbReference type="MINT" id="P35817"/>
<dbReference type="STRING" id="4932.YLR399C"/>
<dbReference type="iPTMnet" id="P35817"/>
<dbReference type="PaxDb" id="4932-YLR399C"/>
<dbReference type="PeptideAtlas" id="P35817"/>
<dbReference type="EnsemblFungi" id="YLR399C_mRNA">
    <property type="protein sequence ID" value="YLR399C"/>
    <property type="gene ID" value="YLR399C"/>
</dbReference>
<dbReference type="GeneID" id="851115"/>
<dbReference type="KEGG" id="sce:YLR399C"/>
<dbReference type="AGR" id="SGD:S000004391"/>
<dbReference type="SGD" id="S000004391">
    <property type="gene designation" value="BDF1"/>
</dbReference>
<dbReference type="VEuPathDB" id="FungiDB:YLR399C"/>
<dbReference type="eggNOG" id="KOG1474">
    <property type="taxonomic scope" value="Eukaryota"/>
</dbReference>
<dbReference type="GeneTree" id="ENSGT00940000176400"/>
<dbReference type="HOGENOM" id="CLU_001499_4_0_1"/>
<dbReference type="InParanoid" id="P35817"/>
<dbReference type="OMA" id="KMNIPHY"/>
<dbReference type="OrthoDB" id="784962at2759"/>
<dbReference type="BioCyc" id="YEAST:G3O-32463-MONOMER"/>
<dbReference type="BioGRID-ORCS" id="851115">
    <property type="hits" value="5 hits in 10 CRISPR screens"/>
</dbReference>
<dbReference type="PRO" id="PR:P35817"/>
<dbReference type="Proteomes" id="UP000002311">
    <property type="component" value="Chromosome XII"/>
</dbReference>
<dbReference type="RNAct" id="P35817">
    <property type="molecule type" value="protein"/>
</dbReference>
<dbReference type="GO" id="GO:0000785">
    <property type="term" value="C:chromatin"/>
    <property type="evidence" value="ECO:0000314"/>
    <property type="project" value="ComplexPortal"/>
</dbReference>
<dbReference type="GO" id="GO:0005634">
    <property type="term" value="C:nucleus"/>
    <property type="evidence" value="ECO:0000318"/>
    <property type="project" value="GO_Central"/>
</dbReference>
<dbReference type="GO" id="GO:0000812">
    <property type="term" value="C:Swr1 complex"/>
    <property type="evidence" value="ECO:0000314"/>
    <property type="project" value="SGD"/>
</dbReference>
<dbReference type="GO" id="GO:0003682">
    <property type="term" value="F:chromatin binding"/>
    <property type="evidence" value="ECO:0000314"/>
    <property type="project" value="SGD"/>
</dbReference>
<dbReference type="GO" id="GO:0001046">
    <property type="term" value="F:core promoter sequence-specific DNA binding"/>
    <property type="evidence" value="ECO:0000314"/>
    <property type="project" value="SGD"/>
</dbReference>
<dbReference type="GO" id="GO:0140008">
    <property type="term" value="F:histone H4 reader activity"/>
    <property type="evidence" value="ECO:0000314"/>
    <property type="project" value="GO_Central"/>
</dbReference>
<dbReference type="GO" id="GO:0070577">
    <property type="term" value="F:lysine-acetylated histone binding"/>
    <property type="evidence" value="ECO:0000314"/>
    <property type="project" value="SGD"/>
</dbReference>
<dbReference type="GO" id="GO:0001094">
    <property type="term" value="F:TFIID-class transcription factor complex binding"/>
    <property type="evidence" value="ECO:0000314"/>
    <property type="project" value="SGD"/>
</dbReference>
<dbReference type="GO" id="GO:0006338">
    <property type="term" value="P:chromatin remodeling"/>
    <property type="evidence" value="ECO:0000353"/>
    <property type="project" value="SGD"/>
</dbReference>
<dbReference type="GO" id="GO:0006281">
    <property type="term" value="P:DNA repair"/>
    <property type="evidence" value="ECO:0000315"/>
    <property type="project" value="SGD"/>
</dbReference>
<dbReference type="GO" id="GO:0031452">
    <property type="term" value="P:negative regulation of heterochromatin formation"/>
    <property type="evidence" value="ECO:0000315"/>
    <property type="project" value="SGD"/>
</dbReference>
<dbReference type="GO" id="GO:1905168">
    <property type="term" value="P:positive regulation of double-strand break repair via homologous recombination"/>
    <property type="evidence" value="ECO:0000315"/>
    <property type="project" value="SGD"/>
</dbReference>
<dbReference type="GO" id="GO:0006355">
    <property type="term" value="P:regulation of DNA-templated transcription"/>
    <property type="evidence" value="ECO:0000318"/>
    <property type="project" value="GO_Central"/>
</dbReference>
<dbReference type="GO" id="GO:0090054">
    <property type="term" value="P:regulation of silent mating-type cassette heterochromatin formation"/>
    <property type="evidence" value="ECO:0000315"/>
    <property type="project" value="SGD"/>
</dbReference>
<dbReference type="GO" id="GO:0009301">
    <property type="term" value="P:snRNA transcription"/>
    <property type="evidence" value="ECO:0000315"/>
    <property type="project" value="SGD"/>
</dbReference>
<dbReference type="GO" id="GO:0030435">
    <property type="term" value="P:sporulation resulting in formation of a cellular spore"/>
    <property type="evidence" value="ECO:0007669"/>
    <property type="project" value="UniProtKB-KW"/>
</dbReference>
<dbReference type="CDD" id="cd05500">
    <property type="entry name" value="Bromo_BDF1_2_I"/>
    <property type="match status" value="1"/>
</dbReference>
<dbReference type="CDD" id="cd05499">
    <property type="entry name" value="Bromo_BDF1_2_II"/>
    <property type="match status" value="1"/>
</dbReference>
<dbReference type="FunFam" id="1.20.920.10:FF:000047">
    <property type="entry name" value="Bromodomain-containing factor 1"/>
    <property type="match status" value="1"/>
</dbReference>
<dbReference type="Gene3D" id="1.20.1270.220">
    <property type="match status" value="1"/>
</dbReference>
<dbReference type="Gene3D" id="1.20.920.10">
    <property type="entry name" value="Bromodomain-like"/>
    <property type="match status" value="2"/>
</dbReference>
<dbReference type="InterPro" id="IPR050935">
    <property type="entry name" value="Bromo_chromatin_reader"/>
</dbReference>
<dbReference type="InterPro" id="IPR001487">
    <property type="entry name" value="Bromodomain"/>
</dbReference>
<dbReference type="InterPro" id="IPR036427">
    <property type="entry name" value="Bromodomain-like_sf"/>
</dbReference>
<dbReference type="InterPro" id="IPR018359">
    <property type="entry name" value="Bromodomain_CS"/>
</dbReference>
<dbReference type="InterPro" id="IPR027353">
    <property type="entry name" value="NET_dom"/>
</dbReference>
<dbReference type="InterPro" id="IPR038336">
    <property type="entry name" value="NET_sf"/>
</dbReference>
<dbReference type="PANTHER" id="PTHR22880:SF225">
    <property type="entry name" value="BROMODOMAIN-CONTAINING PROTEIN BET-1-RELATED"/>
    <property type="match status" value="1"/>
</dbReference>
<dbReference type="PANTHER" id="PTHR22880">
    <property type="entry name" value="FALZ-RELATED BROMODOMAIN-CONTAINING PROTEINS"/>
    <property type="match status" value="1"/>
</dbReference>
<dbReference type="Pfam" id="PF17035">
    <property type="entry name" value="BET"/>
    <property type="match status" value="1"/>
</dbReference>
<dbReference type="Pfam" id="PF00439">
    <property type="entry name" value="Bromodomain"/>
    <property type="match status" value="2"/>
</dbReference>
<dbReference type="PRINTS" id="PR00503">
    <property type="entry name" value="BROMODOMAIN"/>
</dbReference>
<dbReference type="SMART" id="SM00297">
    <property type="entry name" value="BROMO"/>
    <property type="match status" value="2"/>
</dbReference>
<dbReference type="SUPFAM" id="SSF47370">
    <property type="entry name" value="Bromodomain"/>
    <property type="match status" value="2"/>
</dbReference>
<dbReference type="PROSITE" id="PS00633">
    <property type="entry name" value="BROMODOMAIN_1"/>
    <property type="match status" value="2"/>
</dbReference>
<dbReference type="PROSITE" id="PS50014">
    <property type="entry name" value="BROMODOMAIN_2"/>
    <property type="match status" value="2"/>
</dbReference>
<dbReference type="PROSITE" id="PS51525">
    <property type="entry name" value="NET"/>
    <property type="match status" value="1"/>
</dbReference>
<accession>P35817</accession>
<accession>D6VZ34</accession>
<accession>Q06048</accession>
<proteinExistence type="evidence at protein level"/>
<sequence length="686" mass="76978">MTDITPVQNDVDVNGNNVNDDVSSNLKRPIDQGDPSNGLAEEENPANNQLHLKKARLDGDALTSSPAGLAENGIEGATLAANGENGYNATGSGAEDEQQGLKKEEGGQGTKQEDLDENSKQELPMEVPKEPAPAPPPEPDMNNLPQNPIPKHQQKHALLAIKAVKRLKDARPFLQPVDPVKLDIPFYFNYIKRPMDLSTIERKLNVGAYEVPEQITEDFNLMVNNSIKFNGPNAGISQMARNIQASFEKHMLNMPAKDAPPVIAKGRRSSAQEDAPIVIRRAQTHNGRPKRTIHPPKSKDIYPYESKKPKSKRLQQAMKFCQSVLKELMAKKHASYNYPFLEPVDPVSMNLPTYFDYVKEPMDLGTIAKKLNDWQYQTMEDFERDVRLVFKNCYTFNPDGTIVNMMGHRLEEVFNSKWADRPNLDDYDSDEDSRTQGDYDDYESEYSESDIDETIITNPAIQYLEEQLARMKVELQQLKKQELEKIRKERRLARGSKKRGKRSKGRSGSKNASSKGRRDKKNKLKTVVTYDMKRIITERINDLPTSKLERAIDIIKKSMPNISEDDEVELDLDTLDNHTILTLYNTFFRQYESSSGASNGLDGTSGVTRDASSLSPTSAGSRKRRSKALSQEEQSRQIEKIKNKLAILDSASPLSQNGSPGQIQSAAHNGFSSSSDDDVSSESEEE</sequence>